<organism>
    <name type="scientific">Cicer arietinum</name>
    <name type="common">Chickpea</name>
    <name type="synonym">Garbanzo</name>
    <dbReference type="NCBI Taxonomy" id="3827"/>
    <lineage>
        <taxon>Eukaryota</taxon>
        <taxon>Viridiplantae</taxon>
        <taxon>Streptophyta</taxon>
        <taxon>Embryophyta</taxon>
        <taxon>Tracheophyta</taxon>
        <taxon>Spermatophyta</taxon>
        <taxon>Magnoliopsida</taxon>
        <taxon>eudicotyledons</taxon>
        <taxon>Gunneridae</taxon>
        <taxon>Pentapetalae</taxon>
        <taxon>rosids</taxon>
        <taxon>fabids</taxon>
        <taxon>Fabales</taxon>
        <taxon>Fabaceae</taxon>
        <taxon>Papilionoideae</taxon>
        <taxon>50 kb inversion clade</taxon>
        <taxon>NPAAA clade</taxon>
        <taxon>Hologalegina</taxon>
        <taxon>IRL clade</taxon>
        <taxon>Cicereae</taxon>
        <taxon>Cicer</taxon>
    </lineage>
</organism>
<name>CHIA_CICAR</name>
<reference key="1">
    <citation type="journal article" date="1993" name="Plant Physiol.">
        <title>Cloning of a class III acidic chitinase from chickpea.</title>
        <authorList>
            <person name="Vogelsang R."/>
            <person name="Barz W."/>
        </authorList>
    </citation>
    <scope>NUCLEOTIDE SEQUENCE [MRNA]</scope>
    <source>
        <strain>cv. ILC 3279</strain>
    </source>
</reference>
<evidence type="ECO:0000250" key="1"/>
<evidence type="ECO:0000255" key="2"/>
<evidence type="ECO:0000255" key="3">
    <source>
        <dbReference type="PROSITE-ProRule" id="PRU01258"/>
    </source>
</evidence>
<evidence type="ECO:0000305" key="4"/>
<sequence>MEKCFNIIPSLLLISLLIKSSNAAGIAVYWGQNGNEGSLQDACNTNNYQFVNIAFLSTFGNGQNPQINLAGHCDPSTNGCTKFSPEIQACQAKGIKVLLSLGGGAGSYSLNSAEEATTLANYLWNNFLGGTSTSRPLGDAVLDGIDFDIESGGQHYDELAKALNGFSQQKVYLSAAPQCPYPDAHLDSAIQTGLFDYVWVQFYNNPQCQYSNGNINNLVNAWNQWTSSQAKQVFLGVPASDAAAPSGGLIPADVLTSQVLPAIKTSPKYGGVMIWDRFNDAQSGYSNAIKGSV</sequence>
<dbReference type="EC" id="3.2.1.14"/>
<dbReference type="EMBL" id="X70660">
    <property type="protein sequence ID" value="CAA49998.1"/>
    <property type="molecule type" value="mRNA"/>
</dbReference>
<dbReference type="PIR" id="S31763">
    <property type="entry name" value="S31763"/>
</dbReference>
<dbReference type="RefSeq" id="NP_001296619.1">
    <property type="nucleotide sequence ID" value="NM_001309690.1"/>
</dbReference>
<dbReference type="SMR" id="P36908"/>
<dbReference type="STRING" id="3827.P36908"/>
<dbReference type="CAZy" id="GH18">
    <property type="family name" value="Glycoside Hydrolase Family 18"/>
</dbReference>
<dbReference type="GeneID" id="101502863"/>
<dbReference type="KEGG" id="cam:101502863"/>
<dbReference type="OrthoDB" id="6020543at2759"/>
<dbReference type="Proteomes" id="UP000087171">
    <property type="component" value="Chromosome Ca4"/>
</dbReference>
<dbReference type="GO" id="GO:0005576">
    <property type="term" value="C:extracellular region"/>
    <property type="evidence" value="ECO:0007669"/>
    <property type="project" value="UniProtKB-SubCell"/>
</dbReference>
<dbReference type="GO" id="GO:0008843">
    <property type="term" value="F:endochitinase activity"/>
    <property type="evidence" value="ECO:0007669"/>
    <property type="project" value="UniProtKB-EC"/>
</dbReference>
<dbReference type="GO" id="GO:0006032">
    <property type="term" value="P:chitin catabolic process"/>
    <property type="evidence" value="ECO:0007669"/>
    <property type="project" value="UniProtKB-KW"/>
</dbReference>
<dbReference type="GO" id="GO:0000272">
    <property type="term" value="P:polysaccharide catabolic process"/>
    <property type="evidence" value="ECO:0007669"/>
    <property type="project" value="UniProtKB-KW"/>
</dbReference>
<dbReference type="CDD" id="cd02877">
    <property type="entry name" value="GH18_hevamine_XipI_class_III"/>
    <property type="match status" value="1"/>
</dbReference>
<dbReference type="FunFam" id="3.20.20.80:FF:000015">
    <property type="entry name" value="Acidic endochitinase SE2"/>
    <property type="match status" value="1"/>
</dbReference>
<dbReference type="Gene3D" id="3.20.20.80">
    <property type="entry name" value="Glycosidases"/>
    <property type="match status" value="1"/>
</dbReference>
<dbReference type="InterPro" id="IPR045321">
    <property type="entry name" value="Cts1-like"/>
</dbReference>
<dbReference type="InterPro" id="IPR001223">
    <property type="entry name" value="Glyco_hydro18_cat"/>
</dbReference>
<dbReference type="InterPro" id="IPR001579">
    <property type="entry name" value="Glyco_hydro_18_chit_AS"/>
</dbReference>
<dbReference type="InterPro" id="IPR017853">
    <property type="entry name" value="Glycoside_hydrolase_SF"/>
</dbReference>
<dbReference type="InterPro" id="IPR050542">
    <property type="entry name" value="Glycosyl_Hydrlase18_Chitinase"/>
</dbReference>
<dbReference type="PANTHER" id="PTHR45708:SF22">
    <property type="entry name" value="ACIDIC ENDOCHITINASE"/>
    <property type="match status" value="1"/>
</dbReference>
<dbReference type="PANTHER" id="PTHR45708">
    <property type="entry name" value="ENDOCHITINASE"/>
    <property type="match status" value="1"/>
</dbReference>
<dbReference type="Pfam" id="PF00704">
    <property type="entry name" value="Glyco_hydro_18"/>
    <property type="match status" value="1"/>
</dbReference>
<dbReference type="SUPFAM" id="SSF51445">
    <property type="entry name" value="(Trans)glycosidases"/>
    <property type="match status" value="1"/>
</dbReference>
<dbReference type="PROSITE" id="PS01095">
    <property type="entry name" value="GH18_1"/>
    <property type="match status" value="1"/>
</dbReference>
<dbReference type="PROSITE" id="PS51910">
    <property type="entry name" value="GH18_2"/>
    <property type="match status" value="1"/>
</dbReference>
<protein>
    <recommendedName>
        <fullName>Acidic endochitinase</fullName>
        <ecNumber>3.2.1.14</ecNumber>
    </recommendedName>
</protein>
<comment type="function">
    <text>This protein functions as a defense against chitin containing fungal pathogens.</text>
</comment>
<comment type="catalytic activity">
    <reaction>
        <text>Random endo-hydrolysis of N-acetyl-beta-D-glucosaminide (1-&gt;4)-beta-linkages in chitin and chitodextrins.</text>
        <dbReference type="EC" id="3.2.1.14"/>
    </reaction>
</comment>
<comment type="subcellular location">
    <subcellularLocation>
        <location>Secreted</location>
        <location>Extracellular space</location>
    </subcellularLocation>
</comment>
<comment type="similarity">
    <text evidence="4">Belongs to the glycosyl hydrolase 18 family. Chitinase class II subfamily.</text>
</comment>
<proteinExistence type="evidence at transcript level"/>
<keyword id="KW-0119">Carbohydrate metabolism</keyword>
<keyword id="KW-0146">Chitin degradation</keyword>
<keyword id="KW-1015">Disulfide bond</keyword>
<keyword id="KW-0326">Glycosidase</keyword>
<keyword id="KW-0378">Hydrolase</keyword>
<keyword id="KW-0624">Polysaccharide degradation</keyword>
<keyword id="KW-1185">Reference proteome</keyword>
<keyword id="KW-0964">Secreted</keyword>
<keyword id="KW-0732">Signal</keyword>
<feature type="signal peptide" evidence="2">
    <location>
        <begin position="1"/>
        <end position="22"/>
    </location>
</feature>
<feature type="chain" id="PRO_0000011915" description="Acidic endochitinase">
    <location>
        <begin position="23"/>
        <end position="293"/>
    </location>
</feature>
<feature type="domain" description="GH18" evidence="3">
    <location>
        <begin position="24"/>
        <end position="293"/>
    </location>
</feature>
<feature type="active site" description="Proton donor" evidence="3">
    <location>
        <position position="150"/>
    </location>
</feature>
<feature type="disulfide bond" evidence="1">
    <location>
        <begin position="43"/>
        <end position="90"/>
    </location>
</feature>
<feature type="disulfide bond" evidence="1">
    <location>
        <begin position="73"/>
        <end position="80"/>
    </location>
</feature>
<feature type="disulfide bond" evidence="1">
    <location>
        <begin position="179"/>
        <end position="208"/>
    </location>
</feature>
<accession>P36908</accession>